<accession>B1A944</accession>
<gene>
    <name evidence="2" type="primary">accD</name>
</gene>
<geneLocation type="chloroplast"/>
<protein>
    <recommendedName>
        <fullName evidence="2">Acetyl-coenzyme A carboxylase carboxyl transferase subunit beta, chloroplastic</fullName>
        <shortName evidence="2">ACCase subunit beta</shortName>
        <shortName evidence="2">Acetyl-CoA carboxylase carboxyltransferase subunit beta</shortName>
        <ecNumber evidence="2">2.1.3.15</ecNumber>
    </recommendedName>
</protein>
<proteinExistence type="inferred from homology"/>
<feature type="chain" id="PRO_0000359127" description="Acetyl-coenzyme A carboxylase carboxyl transferase subunit beta, chloroplastic">
    <location>
        <begin position="1"/>
        <end position="497"/>
    </location>
</feature>
<feature type="domain" description="CoA carboxyltransferase N-terminal" evidence="3">
    <location>
        <begin position="230"/>
        <end position="497"/>
    </location>
</feature>
<feature type="zinc finger region" description="C4-type" evidence="2">
    <location>
        <begin position="234"/>
        <end position="256"/>
    </location>
</feature>
<feature type="binding site" evidence="2">
    <location>
        <position position="234"/>
    </location>
    <ligand>
        <name>Zn(2+)</name>
        <dbReference type="ChEBI" id="CHEBI:29105"/>
    </ligand>
</feature>
<feature type="binding site" evidence="2">
    <location>
        <position position="237"/>
    </location>
    <ligand>
        <name>Zn(2+)</name>
        <dbReference type="ChEBI" id="CHEBI:29105"/>
    </ligand>
</feature>
<feature type="binding site" evidence="2">
    <location>
        <position position="253"/>
    </location>
    <ligand>
        <name>Zn(2+)</name>
        <dbReference type="ChEBI" id="CHEBI:29105"/>
    </ligand>
</feature>
<feature type="binding site" evidence="2">
    <location>
        <position position="256"/>
    </location>
    <ligand>
        <name>Zn(2+)</name>
        <dbReference type="ChEBI" id="CHEBI:29105"/>
    </ligand>
</feature>
<sequence>MEKSWFNSMLSKGEVEYRCGLSKSMDSLGPIENTSISEDPVINDPDKNIYNSIWGESSSYYSNVDHLVGAKDIRNFISDDTFLVRDSNRDSYSIYFDIENNNFEIDNDHSFLSELESFFYSYRNSSYMNNRSKSDDPHYDPYMYDTKYSWTNHINSCIDSYLRSQICIDSSILSGSDNYNDSYIYNYICSESGKSSESENSNIRTNTNRSDLTIKESSNDLDITQKYRHLWVQCENCYGLNYKKFLKSKMNICEQCGYYLKMSSSDRIELLVDPGTWNPMDENMVSLDPIEFHSEEEPYKDRIDSYQRKTGLTEAVQTGTGQLNGIPIALGVMDFQFMGGSMGSVVGEKITRLIEYATNEFLPLIIVCASGGARMQEGSLSLMQMAKISSALYDYQSNKKLFYVSILTSPTTGGVTASFGMLGDIIIAEPNAYIAFAGKRVIEQTLNKTVPEGSQAAEYLFHKGLFDSIVPRNPLKGVLSELFQLHGFFPLNQNSIK</sequence>
<comment type="function">
    <text evidence="2">Component of the acetyl coenzyme A carboxylase (ACC) complex. Biotin carboxylase (BC) catalyzes the carboxylation of biotin on its carrier protein (BCCP) and then the CO(2) group is transferred by the transcarboxylase to acetyl-CoA to form malonyl-CoA.</text>
</comment>
<comment type="catalytic activity">
    <reaction evidence="2">
        <text>N(6)-carboxybiotinyl-L-lysyl-[protein] + acetyl-CoA = N(6)-biotinyl-L-lysyl-[protein] + malonyl-CoA</text>
        <dbReference type="Rhea" id="RHEA:54728"/>
        <dbReference type="Rhea" id="RHEA-COMP:10505"/>
        <dbReference type="Rhea" id="RHEA-COMP:10506"/>
        <dbReference type="ChEBI" id="CHEBI:57288"/>
        <dbReference type="ChEBI" id="CHEBI:57384"/>
        <dbReference type="ChEBI" id="CHEBI:83144"/>
        <dbReference type="ChEBI" id="CHEBI:83145"/>
        <dbReference type="EC" id="2.1.3.15"/>
    </reaction>
</comment>
<comment type="cofactor">
    <cofactor evidence="2">
        <name>Zn(2+)</name>
        <dbReference type="ChEBI" id="CHEBI:29105"/>
    </cofactor>
    <text evidence="2">Binds 1 zinc ion per subunit.</text>
</comment>
<comment type="pathway">
    <text evidence="2">Lipid metabolism; malonyl-CoA biosynthesis; malonyl-CoA from acetyl-CoA: step 1/1.</text>
</comment>
<comment type="subunit">
    <text evidence="1">Acetyl-CoA carboxylase is a heterohexamer composed of biotin carboxyl carrier protein, biotin carboxylase and 2 subunits each of ACCase subunit alpha and ACCase plastid-coded subunit beta (accD).</text>
</comment>
<comment type="subcellular location">
    <subcellularLocation>
        <location evidence="2">Plastid</location>
        <location evidence="2">Chloroplast stroma</location>
    </subcellularLocation>
</comment>
<comment type="similarity">
    <text evidence="2">Belongs to the AccD/PCCB family.</text>
</comment>
<reference key="1">
    <citation type="journal article" date="2008" name="Nature">
        <title>The draft genome of the transgenic tropical fruit tree papaya (Carica papaya Linnaeus).</title>
        <authorList>
            <person name="Ming R."/>
            <person name="Hou S."/>
            <person name="Feng Y."/>
            <person name="Yu Q."/>
            <person name="Dionne-Laporte A."/>
            <person name="Saw J.H."/>
            <person name="Senin P."/>
            <person name="Wang W."/>
            <person name="Ly B.V."/>
            <person name="Lewis K.L."/>
            <person name="Salzberg S.L."/>
            <person name="Feng L."/>
            <person name="Jones M.R."/>
            <person name="Skelton R.L."/>
            <person name="Murray J.E."/>
            <person name="Chen C."/>
            <person name="Qian W."/>
            <person name="Shen J."/>
            <person name="Du P."/>
            <person name="Eustice M."/>
            <person name="Tong E."/>
            <person name="Tang H."/>
            <person name="Lyons E."/>
            <person name="Paull R.E."/>
            <person name="Michael T.P."/>
            <person name="Wall K."/>
            <person name="Rice D.W."/>
            <person name="Albert H."/>
            <person name="Wang M.L."/>
            <person name="Zhu Y.J."/>
            <person name="Schatz M."/>
            <person name="Nagarajan N."/>
            <person name="Acob R.A."/>
            <person name="Guan P."/>
            <person name="Blas A."/>
            <person name="Wai C.M."/>
            <person name="Ackerman C.M."/>
            <person name="Ren Y."/>
            <person name="Liu C."/>
            <person name="Wang J."/>
            <person name="Wang J."/>
            <person name="Na J.K."/>
            <person name="Shakirov E.V."/>
            <person name="Haas B."/>
            <person name="Thimmapuram J."/>
            <person name="Nelson D."/>
            <person name="Wang X."/>
            <person name="Bowers J.E."/>
            <person name="Gschwend A.R."/>
            <person name="Delcher A.L."/>
            <person name="Singh R."/>
            <person name="Suzuki J.Y."/>
            <person name="Tripathi S."/>
            <person name="Neupane K."/>
            <person name="Wei H."/>
            <person name="Irikura B."/>
            <person name="Paidi M."/>
            <person name="Jiang N."/>
            <person name="Zhang W."/>
            <person name="Presting G."/>
            <person name="Windsor A."/>
            <person name="Navajas-Perez R."/>
            <person name="Torres M.J."/>
            <person name="Feltus F.A."/>
            <person name="Porter B."/>
            <person name="Li Y."/>
            <person name="Burroughs A.M."/>
            <person name="Luo M.C."/>
            <person name="Liu L."/>
            <person name="Christopher D.A."/>
            <person name="Mount S.M."/>
            <person name="Moore P.H."/>
            <person name="Sugimura T."/>
            <person name="Jiang J."/>
            <person name="Schuler M.A."/>
            <person name="Friedman V."/>
            <person name="Mitchell-Olds T."/>
            <person name="Shippen D.E."/>
            <person name="dePamphilis C.W."/>
            <person name="Palmer J.D."/>
            <person name="Freeling M."/>
            <person name="Paterson A.H."/>
            <person name="Gonsalves D."/>
            <person name="Wang L."/>
            <person name="Alam M."/>
        </authorList>
    </citation>
    <scope>NUCLEOTIDE SEQUENCE [LARGE SCALE GENOMIC DNA]</scope>
    <source>
        <strain>cv. SunUp</strain>
    </source>
</reference>
<evidence type="ECO:0000250" key="1"/>
<evidence type="ECO:0000255" key="2">
    <source>
        <dbReference type="HAMAP-Rule" id="MF_01395"/>
    </source>
</evidence>
<evidence type="ECO:0000255" key="3">
    <source>
        <dbReference type="PROSITE-ProRule" id="PRU01136"/>
    </source>
</evidence>
<keyword id="KW-0067">ATP-binding</keyword>
<keyword id="KW-0150">Chloroplast</keyword>
<keyword id="KW-0275">Fatty acid biosynthesis</keyword>
<keyword id="KW-0276">Fatty acid metabolism</keyword>
<keyword id="KW-0444">Lipid biosynthesis</keyword>
<keyword id="KW-0443">Lipid metabolism</keyword>
<keyword id="KW-0479">Metal-binding</keyword>
<keyword id="KW-0547">Nucleotide-binding</keyword>
<keyword id="KW-0934">Plastid</keyword>
<keyword id="KW-0808">Transferase</keyword>
<keyword id="KW-0862">Zinc</keyword>
<keyword id="KW-0863">Zinc-finger</keyword>
<name>ACCD_CARPA</name>
<organism>
    <name type="scientific">Carica papaya</name>
    <name type="common">Papaya</name>
    <dbReference type="NCBI Taxonomy" id="3649"/>
    <lineage>
        <taxon>Eukaryota</taxon>
        <taxon>Viridiplantae</taxon>
        <taxon>Streptophyta</taxon>
        <taxon>Embryophyta</taxon>
        <taxon>Tracheophyta</taxon>
        <taxon>Spermatophyta</taxon>
        <taxon>Magnoliopsida</taxon>
        <taxon>eudicotyledons</taxon>
        <taxon>Gunneridae</taxon>
        <taxon>Pentapetalae</taxon>
        <taxon>rosids</taxon>
        <taxon>malvids</taxon>
        <taxon>Brassicales</taxon>
        <taxon>Caricaceae</taxon>
        <taxon>Carica</taxon>
    </lineage>
</organism>
<dbReference type="EC" id="2.1.3.15" evidence="2"/>
<dbReference type="EMBL" id="EU431223">
    <property type="protein sequence ID" value="ABY86791.1"/>
    <property type="molecule type" value="Genomic_DNA"/>
</dbReference>
<dbReference type="RefSeq" id="YP_001671692.1">
    <property type="nucleotide sequence ID" value="NC_010323.1"/>
</dbReference>
<dbReference type="SMR" id="B1A944"/>
<dbReference type="GeneID" id="5878364"/>
<dbReference type="KEGG" id="cpap:5878364"/>
<dbReference type="OrthoDB" id="1037102at2759"/>
<dbReference type="UniPathway" id="UPA00655">
    <property type="reaction ID" value="UER00711"/>
</dbReference>
<dbReference type="GO" id="GO:0009317">
    <property type="term" value="C:acetyl-CoA carboxylase complex"/>
    <property type="evidence" value="ECO:0007669"/>
    <property type="project" value="InterPro"/>
</dbReference>
<dbReference type="GO" id="GO:0009570">
    <property type="term" value="C:chloroplast stroma"/>
    <property type="evidence" value="ECO:0007669"/>
    <property type="project" value="UniProtKB-SubCell"/>
</dbReference>
<dbReference type="GO" id="GO:0003989">
    <property type="term" value="F:acetyl-CoA carboxylase activity"/>
    <property type="evidence" value="ECO:0007669"/>
    <property type="project" value="InterPro"/>
</dbReference>
<dbReference type="GO" id="GO:0005524">
    <property type="term" value="F:ATP binding"/>
    <property type="evidence" value="ECO:0007669"/>
    <property type="project" value="UniProtKB-KW"/>
</dbReference>
<dbReference type="GO" id="GO:0016743">
    <property type="term" value="F:carboxyl- or carbamoyltransferase activity"/>
    <property type="evidence" value="ECO:0007669"/>
    <property type="project" value="UniProtKB-UniRule"/>
</dbReference>
<dbReference type="GO" id="GO:0008270">
    <property type="term" value="F:zinc ion binding"/>
    <property type="evidence" value="ECO:0007669"/>
    <property type="project" value="UniProtKB-UniRule"/>
</dbReference>
<dbReference type="GO" id="GO:0006633">
    <property type="term" value="P:fatty acid biosynthetic process"/>
    <property type="evidence" value="ECO:0007669"/>
    <property type="project" value="UniProtKB-KW"/>
</dbReference>
<dbReference type="GO" id="GO:2001295">
    <property type="term" value="P:malonyl-CoA biosynthetic process"/>
    <property type="evidence" value="ECO:0007669"/>
    <property type="project" value="UniProtKB-UniRule"/>
</dbReference>
<dbReference type="Gene3D" id="3.90.226.10">
    <property type="entry name" value="2-enoyl-CoA Hydratase, Chain A, domain 1"/>
    <property type="match status" value="1"/>
</dbReference>
<dbReference type="HAMAP" id="MF_01395">
    <property type="entry name" value="AcetylCoA_CT_beta"/>
    <property type="match status" value="1"/>
</dbReference>
<dbReference type="InterPro" id="IPR034733">
    <property type="entry name" value="AcCoA_carboxyl_beta"/>
</dbReference>
<dbReference type="InterPro" id="IPR000438">
    <property type="entry name" value="Acetyl_CoA_COase_Trfase_b_su"/>
</dbReference>
<dbReference type="InterPro" id="IPR029045">
    <property type="entry name" value="ClpP/crotonase-like_dom_sf"/>
</dbReference>
<dbReference type="InterPro" id="IPR011762">
    <property type="entry name" value="COA_CT_N"/>
</dbReference>
<dbReference type="NCBIfam" id="TIGR00515">
    <property type="entry name" value="accD"/>
    <property type="match status" value="1"/>
</dbReference>
<dbReference type="PANTHER" id="PTHR42995">
    <property type="entry name" value="ACETYL-COENZYME A CARBOXYLASE CARBOXYL TRANSFERASE SUBUNIT BETA, CHLOROPLASTIC"/>
    <property type="match status" value="1"/>
</dbReference>
<dbReference type="PANTHER" id="PTHR42995:SF5">
    <property type="entry name" value="ACETYL-COENZYME A CARBOXYLASE CARBOXYL TRANSFERASE SUBUNIT BETA, CHLOROPLASTIC"/>
    <property type="match status" value="1"/>
</dbReference>
<dbReference type="Pfam" id="PF01039">
    <property type="entry name" value="Carboxyl_trans"/>
    <property type="match status" value="1"/>
</dbReference>
<dbReference type="PRINTS" id="PR01070">
    <property type="entry name" value="ACCCTRFRASEB"/>
</dbReference>
<dbReference type="SUPFAM" id="SSF52096">
    <property type="entry name" value="ClpP/crotonase"/>
    <property type="match status" value="1"/>
</dbReference>
<dbReference type="PROSITE" id="PS50980">
    <property type="entry name" value="COA_CT_NTER"/>
    <property type="match status" value="1"/>
</dbReference>